<proteinExistence type="inferred from homology"/>
<name>CAPSD_HBVC2</name>
<evidence type="ECO:0000255" key="1">
    <source>
        <dbReference type="HAMAP-Rule" id="MF_04076"/>
    </source>
</evidence>
<evidence type="ECO:0000256" key="2">
    <source>
        <dbReference type="SAM" id="MobiDB-lite"/>
    </source>
</evidence>
<dbReference type="EMBL" id="AB014394">
    <property type="status" value="NOT_ANNOTATED_CDS"/>
    <property type="molecule type" value="Genomic_DNA"/>
</dbReference>
<dbReference type="SMR" id="P0C6H4"/>
<dbReference type="Proteomes" id="UP000007922">
    <property type="component" value="Genome"/>
</dbReference>
<dbReference type="GO" id="GO:0043657">
    <property type="term" value="C:host cell"/>
    <property type="evidence" value="ECO:0007669"/>
    <property type="project" value="GOC"/>
</dbReference>
<dbReference type="GO" id="GO:0030430">
    <property type="term" value="C:host cell cytoplasm"/>
    <property type="evidence" value="ECO:0007669"/>
    <property type="project" value="UniProtKB-SubCell"/>
</dbReference>
<dbReference type="GO" id="GO:0039619">
    <property type="term" value="C:T=4 icosahedral viral capsid"/>
    <property type="evidence" value="ECO:0007669"/>
    <property type="project" value="UniProtKB-UniRule"/>
</dbReference>
<dbReference type="GO" id="GO:0003677">
    <property type="term" value="F:DNA binding"/>
    <property type="evidence" value="ECO:0007669"/>
    <property type="project" value="UniProtKB-UniRule"/>
</dbReference>
<dbReference type="GO" id="GO:0003723">
    <property type="term" value="F:RNA binding"/>
    <property type="evidence" value="ECO:0007669"/>
    <property type="project" value="UniProtKB-UniRule"/>
</dbReference>
<dbReference type="GO" id="GO:0005198">
    <property type="term" value="F:structural molecule activity"/>
    <property type="evidence" value="ECO:0007669"/>
    <property type="project" value="UniProtKB-UniRule"/>
</dbReference>
<dbReference type="GO" id="GO:0075521">
    <property type="term" value="P:microtubule-dependent intracellular transport of viral material towards nucleus"/>
    <property type="evidence" value="ECO:0007669"/>
    <property type="project" value="UniProtKB-UniRule"/>
</dbReference>
<dbReference type="GO" id="GO:0046718">
    <property type="term" value="P:symbiont entry into host cell"/>
    <property type="evidence" value="ECO:0007669"/>
    <property type="project" value="UniProtKB-UniRule"/>
</dbReference>
<dbReference type="GO" id="GO:0075732">
    <property type="term" value="P:viral penetration into host nucleus"/>
    <property type="evidence" value="ECO:0007669"/>
    <property type="project" value="UniProtKB-UniRule"/>
</dbReference>
<dbReference type="FunFam" id="1.10.4090.10:FF:000001">
    <property type="entry name" value="Capsid protein"/>
    <property type="match status" value="1"/>
</dbReference>
<dbReference type="Gene3D" id="1.10.4090.10">
    <property type="entry name" value="Viral capsid, core domain supefamily, Hepatitis B virus"/>
    <property type="match status" value="1"/>
</dbReference>
<dbReference type="HAMAP" id="MF_04076">
    <property type="entry name" value="HBV_HBEAG"/>
    <property type="match status" value="1"/>
</dbReference>
<dbReference type="InterPro" id="IPR002006">
    <property type="entry name" value="Hepatitis_core"/>
</dbReference>
<dbReference type="InterPro" id="IPR036459">
    <property type="entry name" value="Viral_capsid_core_dom_sf_HBV"/>
</dbReference>
<dbReference type="Pfam" id="PF00906">
    <property type="entry name" value="Hepatitis_core"/>
    <property type="match status" value="3"/>
</dbReference>
<dbReference type="SUPFAM" id="SSF47852">
    <property type="entry name" value="Hepatitis B viral capsid (hbcag)"/>
    <property type="match status" value="1"/>
</dbReference>
<reference key="1">
    <citation type="journal article" date="1998" name="Arch. Virol.">
        <title>Hepatitis B virus genomic sequence in the circulation of hepatocellular carcinoma patients: comparative analysis of 40 full-length isolates.</title>
        <authorList>
            <person name="Takahashi K."/>
            <person name="Akahane Y."/>
            <person name="Hino K."/>
            <person name="Ohta Y."/>
            <person name="Mishiro S."/>
        </authorList>
    </citation>
    <scope>NUCLEOTIDE SEQUENCE [GENOMIC DNA]</scope>
</reference>
<feature type="chain" id="PRO_0000324364" description="Capsid protein">
    <location>
        <begin position="1"/>
        <end position="183"/>
    </location>
</feature>
<feature type="repeat" description="1; half-length">
    <location>
        <begin position="155"/>
        <end position="160"/>
    </location>
</feature>
<feature type="repeat" description="2">
    <location>
        <begin position="162"/>
        <end position="168"/>
    </location>
</feature>
<feature type="repeat" description="3">
    <location>
        <begin position="170"/>
        <end position="176"/>
    </location>
</feature>
<feature type="region of interest" description="Disordered" evidence="2">
    <location>
        <begin position="136"/>
        <end position="183"/>
    </location>
</feature>
<feature type="region of interest" description="3 X 7 AA repeats of S-P-R-R-R-[PR]-S">
    <location>
        <begin position="155"/>
        <end position="176"/>
    </location>
</feature>
<feature type="region of interest" description="RNA binding" evidence="1">
    <location>
        <begin position="177"/>
        <end position="183"/>
    </location>
</feature>
<feature type="short sequence motif" description="Bipartite nuclear localization signal" evidence="1">
    <location>
        <begin position="158"/>
        <end position="175"/>
    </location>
</feature>
<feature type="compositionally biased region" description="Basic residues" evidence="2">
    <location>
        <begin position="149"/>
        <end position="177"/>
    </location>
</feature>
<feature type="modified residue" description="Phosphoserine; by host" evidence="1">
    <location>
        <position position="155"/>
    </location>
</feature>
<feature type="modified residue" description="Phosphoserine; by host" evidence="1">
    <location>
        <position position="162"/>
    </location>
</feature>
<feature type="modified residue" description="Phosphoserine; by host" evidence="1">
    <location>
        <position position="170"/>
    </location>
</feature>
<keyword id="KW-0024">Alternative initiation</keyword>
<keyword id="KW-0167">Capsid protein</keyword>
<keyword id="KW-1176">Cytoplasmic inwards viral transport</keyword>
<keyword id="KW-0238">DNA-binding</keyword>
<keyword id="KW-1035">Host cytoplasm</keyword>
<keyword id="KW-0945">Host-virus interaction</keyword>
<keyword id="KW-1177">Microtubular inwards viral transport</keyword>
<keyword id="KW-0597">Phosphoprotein</keyword>
<keyword id="KW-0677">Repeat</keyword>
<keyword id="KW-0694">RNA-binding</keyword>
<keyword id="KW-1144">T=4 icosahedral capsid protein</keyword>
<keyword id="KW-1163">Viral penetration into host nucleus</keyword>
<keyword id="KW-0946">Virion</keyword>
<keyword id="KW-1160">Virus entry into host cell</keyword>
<sequence length="183" mass="21058">MDIDPYKEFGASVELLSFLPSDFFPSVRDLLDTASALYREALESPEHCSPHHTALRQATLCWGELMNLATWVGSNLADPASRDLVVNYVNVNMGLKFRQLLWFHISCLTFGRETVLEYLVSFGVWIRTPPAYRPPNAPILSTLPETTVVRRRGRSPRRRTPSPRRRRSQSPRRRRSKSRESQC</sequence>
<gene>
    <name evidence="1" type="primary">C</name>
</gene>
<accession>P0C6H4</accession>
<organism>
    <name type="scientific">Hepatitis B virus genotype C subtype ar (isolate Japan/S-207/1988)</name>
    <name type="common">HBV-C</name>
    <dbReference type="NCBI Taxonomy" id="489467"/>
    <lineage>
        <taxon>Viruses</taxon>
        <taxon>Riboviria</taxon>
        <taxon>Pararnavirae</taxon>
        <taxon>Artverviricota</taxon>
        <taxon>Revtraviricetes</taxon>
        <taxon>Blubervirales</taxon>
        <taxon>Hepadnaviridae</taxon>
        <taxon>Orthohepadnavirus</taxon>
        <taxon>Hepatitis B virus</taxon>
        <taxon>hepatitis B virus genotype C</taxon>
    </lineage>
</organism>
<protein>
    <recommendedName>
        <fullName evidence="1">Capsid protein</fullName>
    </recommendedName>
    <alternativeName>
        <fullName evidence="1">Core antigen</fullName>
    </alternativeName>
    <alternativeName>
        <fullName evidence="1">Core protein</fullName>
    </alternativeName>
    <alternativeName>
        <fullName evidence="1">HBcAg</fullName>
    </alternativeName>
    <alternativeName>
        <fullName evidence="1">p21.5</fullName>
    </alternativeName>
</protein>
<comment type="function">
    <text evidence="1">Self assembles to form an icosahedral capsid. Most capsids appear to be large particles with an icosahedral symmetry of T=4 and consist of 240 copies of capsid protein, though a fraction forms smaller T=3 particles consisting of 180 capsid proteins. Entering capsids are transported along microtubules to the nucleus. Phosphorylation of the capsid is thought to induce exposure of nuclear localization signal in the C-terminal portion of the capsid protein that allows binding to the nuclear pore complex via the importin (karyopherin-) alpha and beta. Capsids are imported in intact form through the nuclear pore into the nuclear basket, where it probably binds NUP153. Only capsids that contain the mature viral genome can release the viral DNA and capsid protein into the nucleoplasm. Immature capsids get stuck in the basket. Capsids encapsulate the pre-genomic RNA and the P protein. Pre-genomic RNA is reverse-transcribed into DNA while the capsid is still in the cytoplasm. The capsid can then either be directed to the nucleus, providing more genomes for transcription, or bud through the endoplasmic reticulum to provide new virions.</text>
</comment>
<comment type="subunit">
    <text evidence="1">Homodimerizes, then multimerizes. Interacts with cytosol exposed regions of viral L glycoprotein present in the reticulum-to-Golgi compartment. Interacts with human FLNB. Phosphorylated form interacts with host importin alpha; this interaction depends on the exposure of the NLS, which itself depends upon genome maturation and/or phosphorylation of the capsid protein. Interacts with host NUP153.</text>
</comment>
<comment type="subcellular location">
    <subcellularLocation>
        <location evidence="1">Virion</location>
    </subcellularLocation>
    <subcellularLocation>
        <location evidence="1">Host cytoplasm</location>
    </subcellularLocation>
</comment>
<comment type="alternative products">
    <event type="alternative initiation"/>
    <isoform>
        <id>P0C6H4-1</id>
        <name>Capsid protein</name>
        <sequence type="displayed"/>
    </isoform>
    <isoform>
        <id>Q9WMB7-1</id>
        <name>External core antigen</name>
        <sequence type="external"/>
    </isoform>
</comment>
<comment type="PTM">
    <text evidence="1">Phosphorylated by host SRPK1, SRPK2, and maybe protein kinase C or GAPDH. Phosphorylation is critical for pregenomic RNA packaging. Protein kinase C phosphorylation is stimulated by HBx protein and may play a role in transport of the viral genome to the nucleus at the late step during the viral replication cycle.</text>
</comment>
<comment type="similarity">
    <text evidence="1">Belongs to the orthohepadnavirus core antigen family.</text>
</comment>
<organismHost>
    <name type="scientific">Homo sapiens</name>
    <name type="common">Human</name>
    <dbReference type="NCBI Taxonomy" id="9606"/>
</organismHost>
<organismHost>
    <name type="scientific">Pan troglodytes</name>
    <name type="common">Chimpanzee</name>
    <dbReference type="NCBI Taxonomy" id="9598"/>
</organismHost>